<name>Y3977_RHIEC</name>
<accession>Q2K364</accession>
<keyword id="KW-1185">Reference proteome</keyword>
<evidence type="ECO:0000255" key="1">
    <source>
        <dbReference type="HAMAP-Rule" id="MF_01187"/>
    </source>
</evidence>
<gene>
    <name type="ordered locus">RHE_CH03977</name>
</gene>
<reference key="1">
    <citation type="journal article" date="2006" name="Proc. Natl. Acad. Sci. U.S.A.">
        <title>The partitioned Rhizobium etli genome: genetic and metabolic redundancy in seven interacting replicons.</title>
        <authorList>
            <person name="Gonzalez V."/>
            <person name="Santamaria R.I."/>
            <person name="Bustos P."/>
            <person name="Hernandez-Gonzalez I."/>
            <person name="Medrano-Soto A."/>
            <person name="Moreno-Hagelsieb G."/>
            <person name="Janga S.C."/>
            <person name="Ramirez M.A."/>
            <person name="Jimenez-Jacinto V."/>
            <person name="Collado-Vides J."/>
            <person name="Davila G."/>
        </authorList>
    </citation>
    <scope>NUCLEOTIDE SEQUENCE [LARGE SCALE GENOMIC DNA]</scope>
    <source>
        <strain>ATCC 51251 / DSM 11541 / JCM 21823 / NBRC 15573 / CFN 42</strain>
    </source>
</reference>
<protein>
    <recommendedName>
        <fullName evidence="1">UPF0434 protein RHE_CH03977</fullName>
    </recommendedName>
</protein>
<sequence length="62" mass="7150">MDEKLSRVDPKLLELLVCPLSKGRLSYDREHNELVSEKAQLAYPIRDGIPIMLVSEARRLDE</sequence>
<organism>
    <name type="scientific">Rhizobium etli (strain ATCC 51251 / DSM 11541 / JCM 21823 / NBRC 15573 / CFN 42)</name>
    <dbReference type="NCBI Taxonomy" id="347834"/>
    <lineage>
        <taxon>Bacteria</taxon>
        <taxon>Pseudomonadati</taxon>
        <taxon>Pseudomonadota</taxon>
        <taxon>Alphaproteobacteria</taxon>
        <taxon>Hyphomicrobiales</taxon>
        <taxon>Rhizobiaceae</taxon>
        <taxon>Rhizobium/Agrobacterium group</taxon>
        <taxon>Rhizobium</taxon>
    </lineage>
</organism>
<feature type="chain" id="PRO_0000291144" description="UPF0434 protein RHE_CH03977">
    <location>
        <begin position="1"/>
        <end position="62"/>
    </location>
</feature>
<dbReference type="EMBL" id="CP000133">
    <property type="protein sequence ID" value="ABC92722.1"/>
    <property type="molecule type" value="Genomic_DNA"/>
</dbReference>
<dbReference type="RefSeq" id="WP_003567459.1">
    <property type="nucleotide sequence ID" value="NC_007761.1"/>
</dbReference>
<dbReference type="SMR" id="Q2K364"/>
<dbReference type="KEGG" id="ret:RHE_CH03977"/>
<dbReference type="eggNOG" id="COG2835">
    <property type="taxonomic scope" value="Bacteria"/>
</dbReference>
<dbReference type="HOGENOM" id="CLU_155659_2_2_5"/>
<dbReference type="OrthoDB" id="9812205at2"/>
<dbReference type="Proteomes" id="UP000001936">
    <property type="component" value="Chromosome"/>
</dbReference>
<dbReference type="GO" id="GO:0005829">
    <property type="term" value="C:cytosol"/>
    <property type="evidence" value="ECO:0007669"/>
    <property type="project" value="TreeGrafter"/>
</dbReference>
<dbReference type="FunFam" id="2.20.25.10:FF:000002">
    <property type="entry name" value="UPF0434 protein YcaR"/>
    <property type="match status" value="1"/>
</dbReference>
<dbReference type="Gene3D" id="2.20.25.10">
    <property type="match status" value="1"/>
</dbReference>
<dbReference type="HAMAP" id="MF_01187">
    <property type="entry name" value="UPF0434"/>
    <property type="match status" value="1"/>
</dbReference>
<dbReference type="InterPro" id="IPR005651">
    <property type="entry name" value="Trm112-like"/>
</dbReference>
<dbReference type="PANTHER" id="PTHR33505:SF4">
    <property type="entry name" value="PROTEIN PREY, MITOCHONDRIAL"/>
    <property type="match status" value="1"/>
</dbReference>
<dbReference type="PANTHER" id="PTHR33505">
    <property type="entry name" value="ZGC:162634"/>
    <property type="match status" value="1"/>
</dbReference>
<dbReference type="Pfam" id="PF03966">
    <property type="entry name" value="Trm112p"/>
    <property type="match status" value="1"/>
</dbReference>
<dbReference type="SUPFAM" id="SSF158997">
    <property type="entry name" value="Trm112p-like"/>
    <property type="match status" value="1"/>
</dbReference>
<comment type="similarity">
    <text evidence="1">Belongs to the UPF0434 family.</text>
</comment>
<proteinExistence type="inferred from homology"/>